<organism>
    <name type="scientific">Clavispora lusitaniae (strain ATCC 42720)</name>
    <name type="common">Yeast</name>
    <name type="synonym">Candida lusitaniae</name>
    <dbReference type="NCBI Taxonomy" id="306902"/>
    <lineage>
        <taxon>Eukaryota</taxon>
        <taxon>Fungi</taxon>
        <taxon>Dikarya</taxon>
        <taxon>Ascomycota</taxon>
        <taxon>Saccharomycotina</taxon>
        <taxon>Pichiomycetes</taxon>
        <taxon>Metschnikowiaceae</taxon>
        <taxon>Clavispora</taxon>
    </lineage>
</organism>
<reference key="1">
    <citation type="journal article" date="2009" name="Nature">
        <title>Evolution of pathogenicity and sexual reproduction in eight Candida genomes.</title>
        <authorList>
            <person name="Butler G."/>
            <person name="Rasmussen M.D."/>
            <person name="Lin M.F."/>
            <person name="Santos M.A.S."/>
            <person name="Sakthikumar S."/>
            <person name="Munro C.A."/>
            <person name="Rheinbay E."/>
            <person name="Grabherr M."/>
            <person name="Forche A."/>
            <person name="Reedy J.L."/>
            <person name="Agrafioti I."/>
            <person name="Arnaud M.B."/>
            <person name="Bates S."/>
            <person name="Brown A.J.P."/>
            <person name="Brunke S."/>
            <person name="Costanzo M.C."/>
            <person name="Fitzpatrick D.A."/>
            <person name="de Groot P.W.J."/>
            <person name="Harris D."/>
            <person name="Hoyer L.L."/>
            <person name="Hube B."/>
            <person name="Klis F.M."/>
            <person name="Kodira C."/>
            <person name="Lennard N."/>
            <person name="Logue M.E."/>
            <person name="Martin R."/>
            <person name="Neiman A.M."/>
            <person name="Nikolaou E."/>
            <person name="Quail M.A."/>
            <person name="Quinn J."/>
            <person name="Santos M.C."/>
            <person name="Schmitzberger F.F."/>
            <person name="Sherlock G."/>
            <person name="Shah P."/>
            <person name="Silverstein K.A.T."/>
            <person name="Skrzypek M.S."/>
            <person name="Soll D."/>
            <person name="Staggs R."/>
            <person name="Stansfield I."/>
            <person name="Stumpf M.P.H."/>
            <person name="Sudbery P.E."/>
            <person name="Srikantha T."/>
            <person name="Zeng Q."/>
            <person name="Berman J."/>
            <person name="Berriman M."/>
            <person name="Heitman J."/>
            <person name="Gow N.A.R."/>
            <person name="Lorenz M.C."/>
            <person name="Birren B.W."/>
            <person name="Kellis M."/>
            <person name="Cuomo C.A."/>
        </authorList>
    </citation>
    <scope>NUCLEOTIDE SEQUENCE [LARGE SCALE GENOMIC DNA]</scope>
    <source>
        <strain>ATCC 42720</strain>
    </source>
</reference>
<keyword id="KW-1003">Cell membrane</keyword>
<keyword id="KW-0472">Membrane</keyword>
<keyword id="KW-1185">Reference proteome</keyword>
<gene>
    <name type="primary">RGI1</name>
    <name type="ORF">CLUG_02423</name>
</gene>
<protein>
    <recommendedName>
        <fullName>Respiratory growth induced protein 1</fullName>
    </recommendedName>
</protein>
<accession>C4Y451</accession>
<dbReference type="EMBL" id="CH408078">
    <property type="protein sequence ID" value="EEQ38297.1"/>
    <property type="molecule type" value="Genomic_DNA"/>
</dbReference>
<dbReference type="RefSeq" id="XP_002616979.1">
    <property type="nucleotide sequence ID" value="XM_002616933.1"/>
</dbReference>
<dbReference type="SMR" id="C4Y451"/>
<dbReference type="FunCoup" id="C4Y451">
    <property type="interactions" value="88"/>
</dbReference>
<dbReference type="GeneID" id="8497926"/>
<dbReference type="KEGG" id="clu:CLUG_02423"/>
<dbReference type="VEuPathDB" id="FungiDB:CLUG_02423"/>
<dbReference type="HOGENOM" id="CLU_118207_0_0_1"/>
<dbReference type="InParanoid" id="C4Y451"/>
<dbReference type="OMA" id="HLKYYPP"/>
<dbReference type="OrthoDB" id="112668at4891"/>
<dbReference type="Proteomes" id="UP000007703">
    <property type="component" value="Unassembled WGS sequence"/>
</dbReference>
<dbReference type="GO" id="GO:0005886">
    <property type="term" value="C:plasma membrane"/>
    <property type="evidence" value="ECO:0007669"/>
    <property type="project" value="UniProtKB-SubCell"/>
</dbReference>
<dbReference type="GO" id="GO:0006112">
    <property type="term" value="P:energy reserve metabolic process"/>
    <property type="evidence" value="ECO:0007669"/>
    <property type="project" value="InterPro"/>
</dbReference>
<dbReference type="Gene3D" id="3.40.1000.40">
    <property type="entry name" value="Respiratory growth induced protein 1"/>
    <property type="match status" value="1"/>
</dbReference>
<dbReference type="InterPro" id="IPR022554">
    <property type="entry name" value="RGI1"/>
</dbReference>
<dbReference type="InterPro" id="IPR038235">
    <property type="entry name" value="RGI1_sf"/>
</dbReference>
<dbReference type="Pfam" id="PF10843">
    <property type="entry name" value="RGI1"/>
    <property type="match status" value="1"/>
</dbReference>
<feature type="chain" id="PRO_0000402284" description="Respiratory growth induced protein 1">
    <location>
        <begin position="1"/>
        <end position="197"/>
    </location>
</feature>
<feature type="region of interest" description="Disordered" evidence="2">
    <location>
        <begin position="22"/>
        <end position="50"/>
    </location>
</feature>
<sequence length="197" mass="23354">MTKGKKKQTVELDLNKVEKLEHLMPVPKSRQSSITSVESEDGSLKEVLKPPPRKDFEDLASFESYIRDETWDNEFDYCHAHLTYYPPFVLKEVHDDIEKIKPTMNKNSSKFRRNLQHHIQRHLILEMEKCCGFEMDFGKAKMEETPKNIIWRYEDSGDHGFPKEEEDKFNRHWKLELEVSCNNENPLVQVDYKAIPV</sequence>
<proteinExistence type="inferred from homology"/>
<name>RGI1_CLAL4</name>
<evidence type="ECO:0000250" key="1"/>
<evidence type="ECO:0000256" key="2">
    <source>
        <dbReference type="SAM" id="MobiDB-lite"/>
    </source>
</evidence>
<evidence type="ECO:0000305" key="3"/>
<comment type="function">
    <text evidence="1">Involved in the control of energetic metabolism and significantly contribute to cell fitness, especially under respiratory growth conditions.</text>
</comment>
<comment type="subcellular location">
    <subcellularLocation>
        <location evidence="1">Cell membrane</location>
        <topology evidence="1">Peripheral membrane protein</topology>
    </subcellularLocation>
</comment>
<comment type="similarity">
    <text evidence="3">Belongs to the RGI1 family.</text>
</comment>